<keyword id="KW-0025">Alternative splicing</keyword>
<keyword id="KW-0489">Methyltransferase</keyword>
<keyword id="KW-0496">Mitochondrion</keyword>
<keyword id="KW-1185">Reference proteome</keyword>
<keyword id="KW-0808">Transferase</keyword>
<keyword id="KW-0809">Transit peptide</keyword>
<organism>
    <name type="scientific">Bos taurus</name>
    <name type="common">Bovine</name>
    <dbReference type="NCBI Taxonomy" id="9913"/>
    <lineage>
        <taxon>Eukaryota</taxon>
        <taxon>Metazoa</taxon>
        <taxon>Chordata</taxon>
        <taxon>Craniata</taxon>
        <taxon>Vertebrata</taxon>
        <taxon>Euteleostomi</taxon>
        <taxon>Mammalia</taxon>
        <taxon>Eutheria</taxon>
        <taxon>Laurasiatheria</taxon>
        <taxon>Artiodactyla</taxon>
        <taxon>Ruminantia</taxon>
        <taxon>Pecora</taxon>
        <taxon>Bovidae</taxon>
        <taxon>Bovinae</taxon>
        <taxon>Bos</taxon>
    </lineage>
</organism>
<feature type="transit peptide" description="Mitochondrion" evidence="2">
    <location>
        <begin position="1"/>
        <end position="46"/>
    </location>
</feature>
<feature type="chain" id="PRO_0000315671" description="Protein arginine methyltransferase NDUFAF7, mitochondrial">
    <location>
        <begin position="47"/>
        <end position="441"/>
    </location>
</feature>
<feature type="region of interest" description="Disordered" evidence="3">
    <location>
        <begin position="415"/>
        <end position="434"/>
    </location>
</feature>
<feature type="compositionally biased region" description="Polar residues" evidence="3">
    <location>
        <begin position="418"/>
        <end position="427"/>
    </location>
</feature>
<feature type="splice variant" id="VSP_030603" description="In isoform 2." evidence="4">
    <original>FSQLGSL</original>
    <variation>SNKVSCT</variation>
    <location>
        <begin position="138"/>
        <end position="144"/>
    </location>
</feature>
<feature type="splice variant" id="VSP_030604" description="In isoform 2." evidence="4">
    <location>
        <begin position="145"/>
        <end position="441"/>
    </location>
</feature>
<name>NDUF7_BOVIN</name>
<reference key="1">
    <citation type="journal article" date="2009" name="Science">
        <title>The genome sequence of taurine cattle: a window to ruminant biology and evolution.</title>
        <authorList>
            <consortium name="The bovine genome sequencing and analysis consortium"/>
        </authorList>
    </citation>
    <scope>NUCLEOTIDE SEQUENCE [LARGE SCALE GENOMIC DNA]</scope>
    <source>
        <strain>Hereford</strain>
    </source>
</reference>
<reference key="2">
    <citation type="submission" date="2006-01" db="EMBL/GenBank/DDBJ databases">
        <authorList>
            <consortium name="NIH - Mammalian Gene Collection (MGC) project"/>
        </authorList>
    </citation>
    <scope>NUCLEOTIDE SEQUENCE [LARGE SCALE MRNA] (ISOFORM 2)</scope>
    <scope>NUCLEOTIDE SEQUENCE [LARGE SCALE MRNA] OF 167-441 (ISOFORM 1)</scope>
    <source>
        <strain>Hereford</strain>
        <tissue>Heart ventricle</tissue>
        <tissue>Thymus</tissue>
    </source>
</reference>
<comment type="function">
    <text evidence="1">Arginine methyltransferase involved in the assembly or stability of mitochondrial NADH:ubiquinone oxidoreductase complex (complex I). Acts by mediating symmetric dimethylation of 'Arg-118' of NDUFS2 after it assembles into the complex I, stabilizing the early intermediate complex.</text>
</comment>
<comment type="catalytic activity">
    <reaction evidence="1">
        <text>L-arginyl-[protein] + 2 S-adenosyl-L-methionine = N(omega),N(omega)'-dimethyl-L-arginyl-[protein] + 2 S-adenosyl-L-homocysteine + 2 H(+)</text>
        <dbReference type="Rhea" id="RHEA:48108"/>
        <dbReference type="Rhea" id="RHEA-COMP:10532"/>
        <dbReference type="Rhea" id="RHEA-COMP:11992"/>
        <dbReference type="ChEBI" id="CHEBI:15378"/>
        <dbReference type="ChEBI" id="CHEBI:29965"/>
        <dbReference type="ChEBI" id="CHEBI:57856"/>
        <dbReference type="ChEBI" id="CHEBI:59789"/>
        <dbReference type="ChEBI" id="CHEBI:88221"/>
        <dbReference type="EC" id="2.1.1.320"/>
    </reaction>
</comment>
<comment type="subunit">
    <text evidence="1">Interacts with NDUFS2.</text>
</comment>
<comment type="subcellular location">
    <subcellularLocation>
        <location evidence="1">Mitochondrion</location>
    </subcellularLocation>
</comment>
<comment type="alternative products">
    <event type="alternative splicing"/>
    <isoform>
        <id>Q2KHV5-1</id>
        <name>1</name>
        <sequence type="displayed"/>
    </isoform>
    <isoform>
        <id>Q2KHV5-2</id>
        <name>2</name>
        <sequence type="described" ref="VSP_030603 VSP_030604"/>
    </isoform>
</comment>
<comment type="similarity">
    <text evidence="5">Belongs to the NDUFAF7 family.</text>
</comment>
<comment type="sequence caution" evidence="5">
    <conflict type="frameshift">
        <sequence resource="EMBL-CDS" id="AAI49743"/>
    </conflict>
</comment>
<evidence type="ECO:0000250" key="1">
    <source>
        <dbReference type="UniProtKB" id="Q7L592"/>
    </source>
</evidence>
<evidence type="ECO:0000255" key="2"/>
<evidence type="ECO:0000256" key="3">
    <source>
        <dbReference type="SAM" id="MobiDB-lite"/>
    </source>
</evidence>
<evidence type="ECO:0000303" key="4">
    <source ref="2"/>
</evidence>
<evidence type="ECO:0000305" key="5"/>
<gene>
    <name evidence="1" type="primary">NDUFAF7</name>
</gene>
<proteinExistence type="evidence at transcript level"/>
<accession>Q2KHV5</accession>
<accession>A6QQB0</accession>
<protein>
    <recommendedName>
        <fullName evidence="1">Protein arginine methyltransferase NDUFAF7, mitochondrial</fullName>
        <ecNumber evidence="1">2.1.1.320</ecNumber>
    </recommendedName>
    <alternativeName>
        <fullName evidence="1">NADH dehydrogenase [ubiquinone] complex I, assembly factor 7</fullName>
    </alternativeName>
    <alternativeName>
        <fullName evidence="1">Protein midA homolog</fullName>
    </alternativeName>
</protein>
<dbReference type="EC" id="2.1.1.320" evidence="1"/>
<dbReference type="EMBL" id="AAFC03083630">
    <property type="status" value="NOT_ANNOTATED_CDS"/>
    <property type="molecule type" value="Genomic_DNA"/>
</dbReference>
<dbReference type="EMBL" id="BC112868">
    <property type="protein sequence ID" value="AAI12869.1"/>
    <property type="molecule type" value="mRNA"/>
</dbReference>
<dbReference type="EMBL" id="BC149742">
    <property type="protein sequence ID" value="AAI49743.1"/>
    <property type="status" value="ALT_FRAME"/>
    <property type="molecule type" value="mRNA"/>
</dbReference>
<dbReference type="RefSeq" id="NP_001094519.2">
    <property type="nucleotide sequence ID" value="NM_001101049.2"/>
</dbReference>
<dbReference type="SMR" id="Q2KHV5"/>
<dbReference type="FunCoup" id="Q2KHV5">
    <property type="interactions" value="2810"/>
</dbReference>
<dbReference type="STRING" id="9913.ENSBTAP00000001470"/>
<dbReference type="PaxDb" id="9913-ENSBTAP00000001470"/>
<dbReference type="GeneID" id="504290"/>
<dbReference type="KEGG" id="bta:504290"/>
<dbReference type="CTD" id="55471"/>
<dbReference type="eggNOG" id="KOG2901">
    <property type="taxonomic scope" value="Eukaryota"/>
</dbReference>
<dbReference type="InParanoid" id="Q2KHV5"/>
<dbReference type="OrthoDB" id="438553at2759"/>
<dbReference type="Proteomes" id="UP000009136">
    <property type="component" value="Unplaced"/>
</dbReference>
<dbReference type="GO" id="GO:0005739">
    <property type="term" value="C:mitochondrion"/>
    <property type="evidence" value="ECO:0000250"/>
    <property type="project" value="UniProtKB"/>
</dbReference>
<dbReference type="GO" id="GO:0035243">
    <property type="term" value="F:protein-arginine omega-N symmetric methyltransferase activity"/>
    <property type="evidence" value="ECO:0000250"/>
    <property type="project" value="UniProtKB"/>
</dbReference>
<dbReference type="GO" id="GO:0032981">
    <property type="term" value="P:mitochondrial respiratory chain complex I assembly"/>
    <property type="evidence" value="ECO:0000250"/>
    <property type="project" value="UniProtKB"/>
</dbReference>
<dbReference type="GO" id="GO:0019918">
    <property type="term" value="P:peptidyl-arginine methylation, to symmetrical-dimethyl arginine"/>
    <property type="evidence" value="ECO:0000250"/>
    <property type="project" value="UniProtKB"/>
</dbReference>
<dbReference type="FunFam" id="3.40.50.12710:FF:000001">
    <property type="entry name" value="Protein arginine methyltransferase NDUFAF7"/>
    <property type="match status" value="1"/>
</dbReference>
<dbReference type="Gene3D" id="3.40.50.12710">
    <property type="match status" value="1"/>
</dbReference>
<dbReference type="InterPro" id="IPR003788">
    <property type="entry name" value="NDUFAF7"/>
</dbReference>
<dbReference type="InterPro" id="IPR038375">
    <property type="entry name" value="NDUFAF7_sf"/>
</dbReference>
<dbReference type="InterPro" id="IPR029063">
    <property type="entry name" value="SAM-dependent_MTases_sf"/>
</dbReference>
<dbReference type="PANTHER" id="PTHR12049">
    <property type="entry name" value="PROTEIN ARGININE METHYLTRANSFERASE NDUFAF7, MITOCHONDRIAL"/>
    <property type="match status" value="1"/>
</dbReference>
<dbReference type="PANTHER" id="PTHR12049:SF7">
    <property type="entry name" value="PROTEIN ARGININE METHYLTRANSFERASE NDUFAF7, MITOCHONDRIAL"/>
    <property type="match status" value="1"/>
</dbReference>
<dbReference type="Pfam" id="PF02636">
    <property type="entry name" value="Methyltransf_28"/>
    <property type="match status" value="1"/>
</dbReference>
<dbReference type="SUPFAM" id="SSF53335">
    <property type="entry name" value="S-adenosyl-L-methionine-dependent methyltransferases"/>
    <property type="match status" value="1"/>
</dbReference>
<sequence length="441" mass="49265">MNFLAAAGVRRLCAMRAVLPCLWRGKYFSSGNEPAENNTVTPMLRHLIYKIKSTGPITVAEYMKEVLTNPAKGYYMNRDMLGEEGDFITSPEISQMFGELLGIWFISEWIAAGKNAAFQLVELGPGKGTLLGDILRVFSQLGSLLKNCDISLHLVEVSQKLSEIQALTLTEEKVPLERNAESPVYMKGVTKSGIPVSWYRDLQDVPKEYSFYLAHEFFDVLPVHKFQKTPHGWREVLVDIDPQVSDKLRFVLAPCATPAGAFIQNDETRDHVEVCPEAGVVIQELSQRISLTGGAALIADYGHDGTKTDTFRGFCGYRLHDVLTAPGTADLTADVDFSYLRRMSQGKVASLGPVEQQTFLRNMGIDVRLKILLDKTDDPSLRQQLLQGYNMLMNPMKMGERFNFLALVPHQRLHGRNHQTNARQSKPSPSPVAGFGELAWQ</sequence>